<dbReference type="EMBL" id="CP000308">
    <property type="protein sequence ID" value="ABG15702.1"/>
    <property type="molecule type" value="Genomic_DNA"/>
</dbReference>
<dbReference type="RefSeq" id="WP_002210132.1">
    <property type="nucleotide sequence ID" value="NZ_CP009906.1"/>
</dbReference>
<dbReference type="SMR" id="Q1C1H0"/>
<dbReference type="GeneID" id="96662998"/>
<dbReference type="KEGG" id="ypa:YPA_3740"/>
<dbReference type="Proteomes" id="UP000001971">
    <property type="component" value="Chromosome"/>
</dbReference>
<dbReference type="GO" id="GO:0022625">
    <property type="term" value="C:cytosolic large ribosomal subunit"/>
    <property type="evidence" value="ECO:0007669"/>
    <property type="project" value="TreeGrafter"/>
</dbReference>
<dbReference type="GO" id="GO:0003729">
    <property type="term" value="F:mRNA binding"/>
    <property type="evidence" value="ECO:0007669"/>
    <property type="project" value="TreeGrafter"/>
</dbReference>
<dbReference type="GO" id="GO:0003735">
    <property type="term" value="F:structural constituent of ribosome"/>
    <property type="evidence" value="ECO:0007669"/>
    <property type="project" value="InterPro"/>
</dbReference>
<dbReference type="GO" id="GO:0017148">
    <property type="term" value="P:negative regulation of translation"/>
    <property type="evidence" value="ECO:0007669"/>
    <property type="project" value="TreeGrafter"/>
</dbReference>
<dbReference type="GO" id="GO:0006412">
    <property type="term" value="P:translation"/>
    <property type="evidence" value="ECO:0007669"/>
    <property type="project" value="UniProtKB-UniRule"/>
</dbReference>
<dbReference type="CDD" id="cd00392">
    <property type="entry name" value="Ribosomal_L13"/>
    <property type="match status" value="1"/>
</dbReference>
<dbReference type="FunFam" id="3.90.1180.10:FF:000001">
    <property type="entry name" value="50S ribosomal protein L13"/>
    <property type="match status" value="1"/>
</dbReference>
<dbReference type="Gene3D" id="3.90.1180.10">
    <property type="entry name" value="Ribosomal protein L13"/>
    <property type="match status" value="1"/>
</dbReference>
<dbReference type="HAMAP" id="MF_01366">
    <property type="entry name" value="Ribosomal_uL13"/>
    <property type="match status" value="1"/>
</dbReference>
<dbReference type="InterPro" id="IPR005822">
    <property type="entry name" value="Ribosomal_uL13"/>
</dbReference>
<dbReference type="InterPro" id="IPR005823">
    <property type="entry name" value="Ribosomal_uL13_bac-type"/>
</dbReference>
<dbReference type="InterPro" id="IPR023563">
    <property type="entry name" value="Ribosomal_uL13_CS"/>
</dbReference>
<dbReference type="InterPro" id="IPR036899">
    <property type="entry name" value="Ribosomal_uL13_sf"/>
</dbReference>
<dbReference type="NCBIfam" id="TIGR01066">
    <property type="entry name" value="rplM_bact"/>
    <property type="match status" value="1"/>
</dbReference>
<dbReference type="PANTHER" id="PTHR11545:SF2">
    <property type="entry name" value="LARGE RIBOSOMAL SUBUNIT PROTEIN UL13M"/>
    <property type="match status" value="1"/>
</dbReference>
<dbReference type="PANTHER" id="PTHR11545">
    <property type="entry name" value="RIBOSOMAL PROTEIN L13"/>
    <property type="match status" value="1"/>
</dbReference>
<dbReference type="Pfam" id="PF00572">
    <property type="entry name" value="Ribosomal_L13"/>
    <property type="match status" value="1"/>
</dbReference>
<dbReference type="PIRSF" id="PIRSF002181">
    <property type="entry name" value="Ribosomal_L13"/>
    <property type="match status" value="1"/>
</dbReference>
<dbReference type="SUPFAM" id="SSF52161">
    <property type="entry name" value="Ribosomal protein L13"/>
    <property type="match status" value="1"/>
</dbReference>
<dbReference type="PROSITE" id="PS00783">
    <property type="entry name" value="RIBOSOMAL_L13"/>
    <property type="match status" value="1"/>
</dbReference>
<organism>
    <name type="scientific">Yersinia pestis bv. Antiqua (strain Antiqua)</name>
    <dbReference type="NCBI Taxonomy" id="360102"/>
    <lineage>
        <taxon>Bacteria</taxon>
        <taxon>Pseudomonadati</taxon>
        <taxon>Pseudomonadota</taxon>
        <taxon>Gammaproteobacteria</taxon>
        <taxon>Enterobacterales</taxon>
        <taxon>Yersiniaceae</taxon>
        <taxon>Yersinia</taxon>
    </lineage>
</organism>
<comment type="function">
    <text evidence="1">This protein is one of the early assembly proteins of the 50S ribosomal subunit, although it is not seen to bind rRNA by itself. It is important during the early stages of 50S assembly.</text>
</comment>
<comment type="subunit">
    <text evidence="1">Part of the 50S ribosomal subunit.</text>
</comment>
<comment type="similarity">
    <text evidence="1">Belongs to the universal ribosomal protein uL13 family.</text>
</comment>
<proteinExistence type="inferred from homology"/>
<reference key="1">
    <citation type="journal article" date="2006" name="J. Bacteriol.">
        <title>Complete genome sequence of Yersinia pestis strains Antiqua and Nepal516: evidence of gene reduction in an emerging pathogen.</title>
        <authorList>
            <person name="Chain P.S.G."/>
            <person name="Hu P."/>
            <person name="Malfatti S.A."/>
            <person name="Radnedge L."/>
            <person name="Larimer F."/>
            <person name="Vergez L.M."/>
            <person name="Worsham P."/>
            <person name="Chu M.C."/>
            <person name="Andersen G.L."/>
        </authorList>
    </citation>
    <scope>NUCLEOTIDE SEQUENCE [LARGE SCALE GENOMIC DNA]</scope>
    <source>
        <strain>Antiqua</strain>
    </source>
</reference>
<accession>Q1C1H0</accession>
<evidence type="ECO:0000255" key="1">
    <source>
        <dbReference type="HAMAP-Rule" id="MF_01366"/>
    </source>
</evidence>
<evidence type="ECO:0000305" key="2"/>
<feature type="chain" id="PRO_0000261833" description="Large ribosomal subunit protein uL13">
    <location>
        <begin position="1"/>
        <end position="142"/>
    </location>
</feature>
<keyword id="KW-0687">Ribonucleoprotein</keyword>
<keyword id="KW-0689">Ribosomal protein</keyword>
<gene>
    <name evidence="1" type="primary">rplM</name>
    <name type="ordered locus">YPA_3740</name>
</gene>
<name>RL13_YERPA</name>
<sequence>MKTFTAKPETVKRDWYVVDASGKTLGRLATELARRLRGKHKAEYTPHVDTGDYIIVLNAEKVAVTGNKRTDKIYYHHTGFVGGIKQATFEEMIARRPERVIEIAVKGMLPKGPLGRAMYRKLKVYAGTEHNHAAQQPQVLDI</sequence>
<protein>
    <recommendedName>
        <fullName evidence="1">Large ribosomal subunit protein uL13</fullName>
    </recommendedName>
    <alternativeName>
        <fullName evidence="2">50S ribosomal protein L13</fullName>
    </alternativeName>
</protein>